<comment type="function">
    <text>May be involved in transcriptional regulation.</text>
</comment>
<comment type="interaction">
    <interactant intactId="EBI-14069183">
        <id>Q86XF7</id>
    </interactant>
    <interactant intactId="EBI-3866279">
        <id>Q9BWT7</id>
        <label>CARD10</label>
    </interactant>
    <organismsDiffer>false</organismsDiffer>
    <experiments>3</experiments>
</comment>
<comment type="interaction">
    <interactant intactId="EBI-14069183">
        <id>Q86XF7</id>
    </interactant>
    <interactant intactId="EBI-3867333">
        <id>A8MQ03</id>
        <label>CYSRT1</label>
    </interactant>
    <organismsDiffer>false</organismsDiffer>
    <experiments>3</experiments>
</comment>
<comment type="interaction">
    <interactant intactId="EBI-14069183">
        <id>Q86XF7</id>
    </interactant>
    <interactant intactId="EBI-712814">
        <id>P54257</id>
        <label>HAP1</label>
    </interactant>
    <organismsDiffer>false</organismsDiffer>
    <experiments>5</experiments>
</comment>
<comment type="interaction">
    <interactant intactId="EBI-14069183">
        <id>Q86XF7</id>
    </interactant>
    <interactant intactId="EBI-7060731">
        <id>P61978-2</id>
        <label>HNRNPK</label>
    </interactant>
    <organismsDiffer>false</organismsDiffer>
    <experiments>5</experiments>
</comment>
<comment type="interaction">
    <interactant intactId="EBI-14069183">
        <id>Q86XF7</id>
    </interactant>
    <interactant intactId="EBI-722504">
        <id>O75525</id>
        <label>KHDRBS3</label>
    </interactant>
    <organismsDiffer>false</organismsDiffer>
    <experiments>3</experiments>
</comment>
<comment type="interaction">
    <interactant intactId="EBI-14069183">
        <id>Q86XF7</id>
    </interactant>
    <interactant intactId="EBI-10171697">
        <id>Q6A162</id>
        <label>KRT40</label>
    </interactant>
    <organismsDiffer>false</organismsDiffer>
    <experiments>3</experiments>
</comment>
<comment type="interaction">
    <interactant intactId="EBI-14069183">
        <id>Q86XF7</id>
    </interactant>
    <interactant intactId="EBI-10172290">
        <id>P60409</id>
        <label>KRTAP10-7</label>
    </interactant>
    <organismsDiffer>false</organismsDiffer>
    <experiments>3</experiments>
</comment>
<comment type="interaction">
    <interactant intactId="EBI-14069183">
        <id>Q86XF7</id>
    </interactant>
    <interactant intactId="EBI-10171774">
        <id>P60410</id>
        <label>KRTAP10-8</label>
    </interactant>
    <organismsDiffer>false</organismsDiffer>
    <experiments>3</experiments>
</comment>
<comment type="interaction">
    <interactant intactId="EBI-14069183">
        <id>Q86XF7</id>
    </interactant>
    <interactant intactId="EBI-11988175">
        <id>Q9BYP8</id>
        <label>KRTAP17-1</label>
    </interactant>
    <organismsDiffer>false</organismsDiffer>
    <experiments>3</experiments>
</comment>
<comment type="interaction">
    <interactant intactId="EBI-14069183">
        <id>Q86XF7</id>
    </interactant>
    <interactant intactId="EBI-14065470">
        <id>Q9BYR9</id>
        <label>KRTAP2-4</label>
    </interactant>
    <organismsDiffer>false</organismsDiffer>
    <experiments>3</experiments>
</comment>
<comment type="interaction">
    <interactant intactId="EBI-14069183">
        <id>Q86XF7</id>
    </interactant>
    <interactant intactId="EBI-12074540">
        <id>Q6L8H4</id>
        <label>KRTAP5-1</label>
    </interactant>
    <organismsDiffer>false</organismsDiffer>
    <experiments>3</experiments>
</comment>
<comment type="interaction">
    <interactant intactId="EBI-14069183">
        <id>Q86XF7</id>
    </interactant>
    <interactant intactId="EBI-22311199">
        <id>Q3LI67</id>
        <label>KRTAP6-3</label>
    </interactant>
    <organismsDiffer>false</organismsDiffer>
    <experiments>3</experiments>
</comment>
<comment type="interaction">
    <interactant intactId="EBI-14069183">
        <id>Q86XF7</id>
    </interactant>
    <interactant intactId="EBI-1044640">
        <id>Q9BYQ4</id>
        <label>KRTAP9-2</label>
    </interactant>
    <organismsDiffer>false</organismsDiffer>
    <experiments>5</experiments>
</comment>
<comment type="interaction">
    <interactant intactId="EBI-14069183">
        <id>Q86XF7</id>
    </interactant>
    <interactant intactId="EBI-1043191">
        <id>Q9BYQ3</id>
        <label>KRTAP9-3</label>
    </interactant>
    <organismsDiffer>false</organismsDiffer>
    <experiments>3</experiments>
</comment>
<comment type="interaction">
    <interactant intactId="EBI-14069183">
        <id>Q86XF7</id>
    </interactant>
    <interactant intactId="EBI-717887">
        <id>Q9UPT6</id>
        <label>MAPK8IP3</label>
    </interactant>
    <organismsDiffer>false</organismsDiffer>
    <experiments>3</experiments>
</comment>
<comment type="interaction">
    <interactant intactId="EBI-14069183">
        <id>Q86XF7</id>
    </interactant>
    <interactant intactId="EBI-724076">
        <id>Q99750</id>
        <label>MDFI</label>
    </interactant>
    <organismsDiffer>false</organismsDiffer>
    <experiments>3</experiments>
</comment>
<comment type="interaction">
    <interactant intactId="EBI-14069183">
        <id>Q86XF7</id>
    </interactant>
    <interactant intactId="EBI-17491620">
        <id>P13349</id>
        <label>MYF5</label>
    </interactant>
    <organismsDiffer>false</organismsDiffer>
    <experiments>3</experiments>
</comment>
<comment type="interaction">
    <interactant intactId="EBI-14069183">
        <id>Q86XF7</id>
    </interactant>
    <interactant intactId="EBI-79165">
        <id>Q9NRD5</id>
        <label>PICK1</label>
    </interactant>
    <organismsDiffer>false</organismsDiffer>
    <experiments>3</experiments>
</comment>
<comment type="interaction">
    <interactant intactId="EBI-14069183">
        <id>Q86XF7</id>
    </interactant>
    <interactant intactId="EBI-2481535">
        <id>Q8WV41</id>
        <label>SNX33</label>
    </interactant>
    <organismsDiffer>false</organismsDiffer>
    <experiments>3</experiments>
</comment>
<comment type="interaction">
    <interactant intactId="EBI-14069183">
        <id>Q86XF7</id>
    </interactant>
    <interactant intactId="EBI-7082156">
        <id>Q7Z698</id>
        <label>SPRED2</label>
    </interactant>
    <organismsDiffer>false</organismsDiffer>
    <experiments>3</experiments>
</comment>
<comment type="interaction">
    <interactant intactId="EBI-14069183">
        <id>Q86XF7</id>
    </interactant>
    <interactant intactId="EBI-949753">
        <id>Q63HR2</id>
        <label>TNS2</label>
    </interactant>
    <organismsDiffer>false</organismsDiffer>
    <experiments>3</experiments>
</comment>
<comment type="interaction">
    <interactant intactId="EBI-14069183">
        <id>Q86XF7</id>
    </interactant>
    <interactant intactId="EBI-11952721">
        <id>Q05BL1</id>
        <label>TP53BP2</label>
    </interactant>
    <organismsDiffer>false</organismsDiffer>
    <experiments>3</experiments>
</comment>
<comment type="interaction">
    <interactant intactId="EBI-14069183">
        <id>Q86XF7</id>
    </interactant>
    <interactant intactId="EBI-725997">
        <id>Q8WV44</id>
        <label>TRIM41</label>
    </interactant>
    <organismsDiffer>false</organismsDiffer>
    <experiments>3</experiments>
</comment>
<comment type="interaction">
    <interactant intactId="EBI-14069183">
        <id>Q86XF7</id>
    </interactant>
    <interactant intactId="EBI-11035148">
        <id>Q8TF50</id>
        <label>ZNF526</label>
    </interactant>
    <organismsDiffer>false</organismsDiffer>
    <experiments>3</experiments>
</comment>
<comment type="interaction">
    <interactant intactId="EBI-14069183">
        <id>Q86XF7</id>
    </interactant>
    <interactant intactId="EBI-527853">
        <id>Q9UGI0</id>
        <label>ZRANB1</label>
    </interactant>
    <organismsDiffer>false</organismsDiffer>
    <experiments>3</experiments>
</comment>
<comment type="subcellular location">
    <subcellularLocation>
        <location evidence="3">Nucleus</location>
    </subcellularLocation>
</comment>
<comment type="similarity">
    <text evidence="3">Belongs to the krueppel C2H2-type zinc-finger protein family.</text>
</comment>
<organism>
    <name type="scientific">Homo sapiens</name>
    <name type="common">Human</name>
    <dbReference type="NCBI Taxonomy" id="9606"/>
    <lineage>
        <taxon>Eukaryota</taxon>
        <taxon>Metazoa</taxon>
        <taxon>Chordata</taxon>
        <taxon>Craniata</taxon>
        <taxon>Vertebrata</taxon>
        <taxon>Euteleostomi</taxon>
        <taxon>Mammalia</taxon>
        <taxon>Eutheria</taxon>
        <taxon>Euarchontoglires</taxon>
        <taxon>Primates</taxon>
        <taxon>Haplorrhini</taxon>
        <taxon>Catarrhini</taxon>
        <taxon>Hominidae</taxon>
        <taxon>Homo</taxon>
    </lineage>
</organism>
<accession>Q86XF7</accession>
<accession>B4DX54</accession>
<reference key="1">
    <citation type="journal article" date="2004" name="Nat. Genet.">
        <title>Complete sequencing and characterization of 21,243 full-length human cDNAs.</title>
        <authorList>
            <person name="Ota T."/>
            <person name="Suzuki Y."/>
            <person name="Nishikawa T."/>
            <person name="Otsuki T."/>
            <person name="Sugiyama T."/>
            <person name="Irie R."/>
            <person name="Wakamatsu A."/>
            <person name="Hayashi K."/>
            <person name="Sato H."/>
            <person name="Nagai K."/>
            <person name="Kimura K."/>
            <person name="Makita H."/>
            <person name="Sekine M."/>
            <person name="Obayashi M."/>
            <person name="Nishi T."/>
            <person name="Shibahara T."/>
            <person name="Tanaka T."/>
            <person name="Ishii S."/>
            <person name="Yamamoto J."/>
            <person name="Saito K."/>
            <person name="Kawai Y."/>
            <person name="Isono Y."/>
            <person name="Nakamura Y."/>
            <person name="Nagahari K."/>
            <person name="Murakami K."/>
            <person name="Yasuda T."/>
            <person name="Iwayanagi T."/>
            <person name="Wagatsuma M."/>
            <person name="Shiratori A."/>
            <person name="Sudo H."/>
            <person name="Hosoiri T."/>
            <person name="Kaku Y."/>
            <person name="Kodaira H."/>
            <person name="Kondo H."/>
            <person name="Sugawara M."/>
            <person name="Takahashi M."/>
            <person name="Kanda K."/>
            <person name="Yokoi T."/>
            <person name="Furuya T."/>
            <person name="Kikkawa E."/>
            <person name="Omura Y."/>
            <person name="Abe K."/>
            <person name="Kamihara K."/>
            <person name="Katsuta N."/>
            <person name="Sato K."/>
            <person name="Tanikawa M."/>
            <person name="Yamazaki M."/>
            <person name="Ninomiya K."/>
            <person name="Ishibashi T."/>
            <person name="Yamashita H."/>
            <person name="Murakawa K."/>
            <person name="Fujimori K."/>
            <person name="Tanai H."/>
            <person name="Kimata M."/>
            <person name="Watanabe M."/>
            <person name="Hiraoka S."/>
            <person name="Chiba Y."/>
            <person name="Ishida S."/>
            <person name="Ono Y."/>
            <person name="Takiguchi S."/>
            <person name="Watanabe S."/>
            <person name="Yosida M."/>
            <person name="Hotuta T."/>
            <person name="Kusano J."/>
            <person name="Kanehori K."/>
            <person name="Takahashi-Fujii A."/>
            <person name="Hara H."/>
            <person name="Tanase T.-O."/>
            <person name="Nomura Y."/>
            <person name="Togiya S."/>
            <person name="Komai F."/>
            <person name="Hara R."/>
            <person name="Takeuchi K."/>
            <person name="Arita M."/>
            <person name="Imose N."/>
            <person name="Musashino K."/>
            <person name="Yuuki H."/>
            <person name="Oshima A."/>
            <person name="Sasaki N."/>
            <person name="Aotsuka S."/>
            <person name="Yoshikawa Y."/>
            <person name="Matsunawa H."/>
            <person name="Ichihara T."/>
            <person name="Shiohata N."/>
            <person name="Sano S."/>
            <person name="Moriya S."/>
            <person name="Momiyama H."/>
            <person name="Satoh N."/>
            <person name="Takami S."/>
            <person name="Terashima Y."/>
            <person name="Suzuki O."/>
            <person name="Nakagawa S."/>
            <person name="Senoh A."/>
            <person name="Mizoguchi H."/>
            <person name="Goto Y."/>
            <person name="Shimizu F."/>
            <person name="Wakebe H."/>
            <person name="Hishigaki H."/>
            <person name="Watanabe T."/>
            <person name="Sugiyama A."/>
            <person name="Takemoto M."/>
            <person name="Kawakami B."/>
            <person name="Yamazaki M."/>
            <person name="Watanabe K."/>
            <person name="Kumagai A."/>
            <person name="Itakura S."/>
            <person name="Fukuzumi Y."/>
            <person name="Fujimori Y."/>
            <person name="Komiyama M."/>
            <person name="Tashiro H."/>
            <person name="Tanigami A."/>
            <person name="Fujiwara T."/>
            <person name="Ono T."/>
            <person name="Yamada K."/>
            <person name="Fujii Y."/>
            <person name="Ozaki K."/>
            <person name="Hirao M."/>
            <person name="Ohmori Y."/>
            <person name="Kawabata A."/>
            <person name="Hikiji T."/>
            <person name="Kobatake N."/>
            <person name="Inagaki H."/>
            <person name="Ikema Y."/>
            <person name="Okamoto S."/>
            <person name="Okitani R."/>
            <person name="Kawakami T."/>
            <person name="Noguchi S."/>
            <person name="Itoh T."/>
            <person name="Shigeta K."/>
            <person name="Senba T."/>
            <person name="Matsumura K."/>
            <person name="Nakajima Y."/>
            <person name="Mizuno T."/>
            <person name="Morinaga M."/>
            <person name="Sasaki M."/>
            <person name="Togashi T."/>
            <person name="Oyama M."/>
            <person name="Hata H."/>
            <person name="Watanabe M."/>
            <person name="Komatsu T."/>
            <person name="Mizushima-Sugano J."/>
            <person name="Satoh T."/>
            <person name="Shirai Y."/>
            <person name="Takahashi Y."/>
            <person name="Nakagawa K."/>
            <person name="Okumura K."/>
            <person name="Nagase T."/>
            <person name="Nomura N."/>
            <person name="Kikuchi H."/>
            <person name="Masuho Y."/>
            <person name="Yamashita R."/>
            <person name="Nakai K."/>
            <person name="Yada T."/>
            <person name="Nakamura Y."/>
            <person name="Ohara O."/>
            <person name="Isogai T."/>
            <person name="Sugano S."/>
        </authorList>
    </citation>
    <scope>NUCLEOTIDE SEQUENCE [LARGE SCALE MRNA]</scope>
    <source>
        <tissue>Testis</tissue>
    </source>
</reference>
<reference key="2">
    <citation type="submission" date="2005-07" db="EMBL/GenBank/DDBJ databases">
        <authorList>
            <person name="Mural R.J."/>
            <person name="Istrail S."/>
            <person name="Sutton G.G."/>
            <person name="Florea L."/>
            <person name="Halpern A.L."/>
            <person name="Mobarry C.M."/>
            <person name="Lippert R."/>
            <person name="Walenz B."/>
            <person name="Shatkay H."/>
            <person name="Dew I."/>
            <person name="Miller J.R."/>
            <person name="Flanigan M.J."/>
            <person name="Edwards N.J."/>
            <person name="Bolanos R."/>
            <person name="Fasulo D."/>
            <person name="Halldorsson B.V."/>
            <person name="Hannenhalli S."/>
            <person name="Turner R."/>
            <person name="Yooseph S."/>
            <person name="Lu F."/>
            <person name="Nusskern D.R."/>
            <person name="Shue B.C."/>
            <person name="Zheng X.H."/>
            <person name="Zhong F."/>
            <person name="Delcher A.L."/>
            <person name="Huson D.H."/>
            <person name="Kravitz S.A."/>
            <person name="Mouchard L."/>
            <person name="Reinert K."/>
            <person name="Remington K.A."/>
            <person name="Clark A.G."/>
            <person name="Waterman M.S."/>
            <person name="Eichler E.E."/>
            <person name="Adams M.D."/>
            <person name="Hunkapiller M.W."/>
            <person name="Myers E.W."/>
            <person name="Venter J.C."/>
        </authorList>
    </citation>
    <scope>NUCLEOTIDE SEQUENCE [LARGE SCALE GENOMIC DNA]</scope>
</reference>
<reference key="3">
    <citation type="journal article" date="2004" name="Genome Res.">
        <title>The status, quality, and expansion of the NIH full-length cDNA project: the Mammalian Gene Collection (MGC).</title>
        <authorList>
            <consortium name="The MGC Project Team"/>
        </authorList>
    </citation>
    <scope>NUCLEOTIDE SEQUENCE [LARGE SCALE MRNA]</scope>
    <source>
        <tissue>Pancreas</tissue>
    </source>
</reference>
<sequence>MLERGAESAAGATDPSPTGKEPVTKEAPHQGPPQKPSQSAPGPTASAGSPPRPRRRPPPQRPHRCPDCDKAFSYPSKLATHRLAHGGARPHPCPDCPKAFSYPSKLAAHRLTHSGARPHPCPHCPKSFGHRSKLAAHLWTHAPTRPYPCPDCPKSFCYPSKLAAHRHTHHATDARPYPCPHCPKAFSFPSKLAAHRLCHDPPTAPGSQATAWHRCSSCGQAFGQRRLLLLHQRSHHQVEHKGERD</sequence>
<name>ZN575_HUMAN</name>
<proteinExistence type="evidence at protein level"/>
<evidence type="ECO:0000255" key="1">
    <source>
        <dbReference type="PROSITE-ProRule" id="PRU00042"/>
    </source>
</evidence>
<evidence type="ECO:0000256" key="2">
    <source>
        <dbReference type="SAM" id="MobiDB-lite"/>
    </source>
</evidence>
<evidence type="ECO:0000305" key="3"/>
<gene>
    <name type="primary">ZNF575</name>
</gene>
<keyword id="KW-0238">DNA-binding</keyword>
<keyword id="KW-0479">Metal-binding</keyword>
<keyword id="KW-0539">Nucleus</keyword>
<keyword id="KW-1267">Proteomics identification</keyword>
<keyword id="KW-1185">Reference proteome</keyword>
<keyword id="KW-0677">Repeat</keyword>
<keyword id="KW-0804">Transcription</keyword>
<keyword id="KW-0805">Transcription regulation</keyword>
<keyword id="KW-0862">Zinc</keyword>
<keyword id="KW-0863">Zinc-finger</keyword>
<feature type="chain" id="PRO_0000047664" description="Zinc finger protein 575">
    <location>
        <begin position="1"/>
        <end position="245"/>
    </location>
</feature>
<feature type="zinc finger region" description="C2H2-type 1" evidence="1">
    <location>
        <begin position="63"/>
        <end position="85"/>
    </location>
</feature>
<feature type="zinc finger region" description="C2H2-type 2" evidence="1">
    <location>
        <begin position="91"/>
        <end position="113"/>
    </location>
</feature>
<feature type="zinc finger region" description="C2H2-type 3" evidence="1">
    <location>
        <begin position="119"/>
        <end position="141"/>
    </location>
</feature>
<feature type="zinc finger region" description="C2H2-type 4" evidence="1">
    <location>
        <begin position="147"/>
        <end position="169"/>
    </location>
</feature>
<feature type="zinc finger region" description="C2H2-type 5" evidence="1">
    <location>
        <begin position="177"/>
        <end position="199"/>
    </location>
</feature>
<feature type="zinc finger region" description="C2H2-type 6" evidence="1">
    <location>
        <begin position="213"/>
        <end position="240"/>
    </location>
</feature>
<feature type="region of interest" description="Disordered" evidence="2">
    <location>
        <begin position="1"/>
        <end position="67"/>
    </location>
</feature>
<feature type="compositionally biased region" description="Low complexity" evidence="2">
    <location>
        <begin position="36"/>
        <end position="49"/>
    </location>
</feature>
<feature type="compositionally biased region" description="Basic residues" evidence="2">
    <location>
        <begin position="52"/>
        <end position="63"/>
    </location>
</feature>
<dbReference type="EMBL" id="AK301820">
    <property type="protein sequence ID" value="BAG63266.1"/>
    <property type="molecule type" value="mRNA"/>
</dbReference>
<dbReference type="EMBL" id="CH471126">
    <property type="protein sequence ID" value="EAW57198.1"/>
    <property type="molecule type" value="Genomic_DNA"/>
</dbReference>
<dbReference type="EMBL" id="BC043611">
    <property type="protein sequence ID" value="AAH43611.1"/>
    <property type="molecule type" value="mRNA"/>
</dbReference>
<dbReference type="CCDS" id="CCDS12623.1"/>
<dbReference type="RefSeq" id="NP_001381166.1">
    <property type="nucleotide sequence ID" value="NM_001394237.1"/>
</dbReference>
<dbReference type="RefSeq" id="NP_777605.1">
    <property type="nucleotide sequence ID" value="NM_174945.3"/>
</dbReference>
<dbReference type="RefSeq" id="XP_005258840.1">
    <property type="nucleotide sequence ID" value="XM_005258783.3"/>
</dbReference>
<dbReference type="RefSeq" id="XP_011525095.1">
    <property type="nucleotide sequence ID" value="XM_011526793.4"/>
</dbReference>
<dbReference type="RefSeq" id="XP_047294593.1">
    <property type="nucleotide sequence ID" value="XM_047438637.1"/>
</dbReference>
<dbReference type="RefSeq" id="XP_054176601.1">
    <property type="nucleotide sequence ID" value="XM_054320626.1"/>
</dbReference>
<dbReference type="SMR" id="Q86XF7"/>
<dbReference type="BioGRID" id="129835">
    <property type="interactions" value="26"/>
</dbReference>
<dbReference type="FunCoup" id="Q86XF7">
    <property type="interactions" value="20"/>
</dbReference>
<dbReference type="IntAct" id="Q86XF7">
    <property type="interactions" value="25"/>
</dbReference>
<dbReference type="STRING" id="9606.ENSP00000315870"/>
<dbReference type="GlyGen" id="Q86XF7">
    <property type="glycosylation" value="1 site"/>
</dbReference>
<dbReference type="iPTMnet" id="Q86XF7"/>
<dbReference type="PhosphoSitePlus" id="Q86XF7"/>
<dbReference type="BioMuta" id="ZNF575"/>
<dbReference type="DMDM" id="74762460"/>
<dbReference type="jPOST" id="Q86XF7"/>
<dbReference type="MassIVE" id="Q86XF7"/>
<dbReference type="PaxDb" id="9606-ENSP00000315870"/>
<dbReference type="PeptideAtlas" id="Q86XF7"/>
<dbReference type="ProteomicsDB" id="70274"/>
<dbReference type="Antibodypedia" id="17608">
    <property type="antibodies" value="130 antibodies from 23 providers"/>
</dbReference>
<dbReference type="DNASU" id="284346"/>
<dbReference type="Ensembl" id="ENST00000314228.10">
    <property type="protein sequence ID" value="ENSP00000315870.4"/>
    <property type="gene ID" value="ENSG00000176472.11"/>
</dbReference>
<dbReference type="Ensembl" id="ENST00000598080.6">
    <property type="protein sequence ID" value="ENSP00000471083.2"/>
    <property type="gene ID" value="ENSG00000176472.11"/>
</dbReference>
<dbReference type="Ensembl" id="ENST00000601282.1">
    <property type="protein sequence ID" value="ENSP00000472578.1"/>
    <property type="gene ID" value="ENSG00000176472.11"/>
</dbReference>
<dbReference type="GeneID" id="284346"/>
<dbReference type="KEGG" id="hsa:284346"/>
<dbReference type="MANE-Select" id="ENST00000314228.10">
    <property type="protein sequence ID" value="ENSP00000315870.4"/>
    <property type="RefSeq nucleotide sequence ID" value="NM_174945.3"/>
    <property type="RefSeq protein sequence ID" value="NP_777605.1"/>
</dbReference>
<dbReference type="UCSC" id="uc002ows.4">
    <property type="organism name" value="human"/>
</dbReference>
<dbReference type="AGR" id="HGNC:27606"/>
<dbReference type="CTD" id="284346"/>
<dbReference type="DisGeNET" id="284346"/>
<dbReference type="GeneCards" id="ZNF575"/>
<dbReference type="HGNC" id="HGNC:27606">
    <property type="gene designation" value="ZNF575"/>
</dbReference>
<dbReference type="HPA" id="ENSG00000176472">
    <property type="expression patterns" value="Low tissue specificity"/>
</dbReference>
<dbReference type="neXtProt" id="NX_Q86XF7"/>
<dbReference type="OpenTargets" id="ENSG00000176472"/>
<dbReference type="PharmGKB" id="PA134958979"/>
<dbReference type="VEuPathDB" id="HostDB:ENSG00000176472"/>
<dbReference type="eggNOG" id="KOG1721">
    <property type="taxonomic scope" value="Eukaryota"/>
</dbReference>
<dbReference type="GeneTree" id="ENSGT00940000162551"/>
<dbReference type="HOGENOM" id="CLU_069747_0_0_1"/>
<dbReference type="InParanoid" id="Q86XF7"/>
<dbReference type="OrthoDB" id="7331812at2759"/>
<dbReference type="PAN-GO" id="Q86XF7">
    <property type="GO annotations" value="3 GO annotations based on evolutionary models"/>
</dbReference>
<dbReference type="PhylomeDB" id="Q86XF7"/>
<dbReference type="TreeFam" id="TF338022"/>
<dbReference type="PathwayCommons" id="Q86XF7"/>
<dbReference type="SignaLink" id="Q86XF7"/>
<dbReference type="BioGRID-ORCS" id="284346">
    <property type="hits" value="16 hits in 1167 CRISPR screens"/>
</dbReference>
<dbReference type="ChiTaRS" id="ZNF575">
    <property type="organism name" value="human"/>
</dbReference>
<dbReference type="GenomeRNAi" id="284346"/>
<dbReference type="Pharos" id="Q86XF7">
    <property type="development level" value="Tdark"/>
</dbReference>
<dbReference type="PRO" id="PR:Q86XF7"/>
<dbReference type="Proteomes" id="UP000005640">
    <property type="component" value="Chromosome 19"/>
</dbReference>
<dbReference type="RNAct" id="Q86XF7">
    <property type="molecule type" value="protein"/>
</dbReference>
<dbReference type="Bgee" id="ENSG00000176472">
    <property type="expression patterns" value="Expressed in mucosa of transverse colon and 102 other cell types or tissues"/>
</dbReference>
<dbReference type="ExpressionAtlas" id="Q86XF7">
    <property type="expression patterns" value="baseline and differential"/>
</dbReference>
<dbReference type="GO" id="GO:0005634">
    <property type="term" value="C:nucleus"/>
    <property type="evidence" value="ECO:0007669"/>
    <property type="project" value="UniProtKB-SubCell"/>
</dbReference>
<dbReference type="GO" id="GO:0000981">
    <property type="term" value="F:DNA-binding transcription factor activity, RNA polymerase II-specific"/>
    <property type="evidence" value="ECO:0000318"/>
    <property type="project" value="GO_Central"/>
</dbReference>
<dbReference type="GO" id="GO:0000978">
    <property type="term" value="F:RNA polymerase II cis-regulatory region sequence-specific DNA binding"/>
    <property type="evidence" value="ECO:0000318"/>
    <property type="project" value="GO_Central"/>
</dbReference>
<dbReference type="GO" id="GO:0008270">
    <property type="term" value="F:zinc ion binding"/>
    <property type="evidence" value="ECO:0007669"/>
    <property type="project" value="UniProtKB-KW"/>
</dbReference>
<dbReference type="GO" id="GO:0006357">
    <property type="term" value="P:regulation of transcription by RNA polymerase II"/>
    <property type="evidence" value="ECO:0000318"/>
    <property type="project" value="GO_Central"/>
</dbReference>
<dbReference type="FunFam" id="3.30.160.60:FF:000100">
    <property type="entry name" value="Zinc finger 45-like"/>
    <property type="match status" value="1"/>
</dbReference>
<dbReference type="FunFam" id="3.30.160.60:FF:000565">
    <property type="entry name" value="Zinc finger protein 575"/>
    <property type="match status" value="3"/>
</dbReference>
<dbReference type="Gene3D" id="3.30.160.60">
    <property type="entry name" value="Classic Zinc Finger"/>
    <property type="match status" value="5"/>
</dbReference>
<dbReference type="InterPro" id="IPR050636">
    <property type="entry name" value="C2H2-ZF_domain-containing"/>
</dbReference>
<dbReference type="InterPro" id="IPR036236">
    <property type="entry name" value="Znf_C2H2_sf"/>
</dbReference>
<dbReference type="InterPro" id="IPR013087">
    <property type="entry name" value="Znf_C2H2_type"/>
</dbReference>
<dbReference type="PANTHER" id="PTHR47772">
    <property type="entry name" value="ZINC FINGER PROTEIN 200"/>
    <property type="match status" value="1"/>
</dbReference>
<dbReference type="PANTHER" id="PTHR47772:SF10">
    <property type="entry name" value="ZINC FINGER PROTEIN 358"/>
    <property type="match status" value="1"/>
</dbReference>
<dbReference type="Pfam" id="PF00096">
    <property type="entry name" value="zf-C2H2"/>
    <property type="match status" value="6"/>
</dbReference>
<dbReference type="SMART" id="SM00355">
    <property type="entry name" value="ZnF_C2H2"/>
    <property type="match status" value="6"/>
</dbReference>
<dbReference type="SUPFAM" id="SSF57667">
    <property type="entry name" value="beta-beta-alpha zinc fingers"/>
    <property type="match status" value="4"/>
</dbReference>
<dbReference type="PROSITE" id="PS00028">
    <property type="entry name" value="ZINC_FINGER_C2H2_1"/>
    <property type="match status" value="6"/>
</dbReference>
<dbReference type="PROSITE" id="PS50157">
    <property type="entry name" value="ZINC_FINGER_C2H2_2"/>
    <property type="match status" value="6"/>
</dbReference>
<protein>
    <recommendedName>
        <fullName>Zinc finger protein 575</fullName>
    </recommendedName>
</protein>